<proteinExistence type="inferred from homology"/>
<organism>
    <name type="scientific">Tropheryma whipplei (strain TW08/27)</name>
    <name type="common">Whipple's bacillus</name>
    <dbReference type="NCBI Taxonomy" id="218496"/>
    <lineage>
        <taxon>Bacteria</taxon>
        <taxon>Bacillati</taxon>
        <taxon>Actinomycetota</taxon>
        <taxon>Actinomycetes</taxon>
        <taxon>Micrococcales</taxon>
        <taxon>Tropherymataceae</taxon>
        <taxon>Tropheryma</taxon>
    </lineage>
</organism>
<accession>P64216</accession>
<accession>Q83MS2</accession>
<accession>Q83NB6</accession>
<feature type="chain" id="PRO_0000166262" description="Glycine cleavage system H protein">
    <location>
        <begin position="1"/>
        <end position="121"/>
    </location>
</feature>
<feature type="domain" description="Lipoyl-binding" evidence="2">
    <location>
        <begin position="22"/>
        <end position="102"/>
    </location>
</feature>
<feature type="modified residue" description="N6-lipoyllysine" evidence="1">
    <location>
        <position position="63"/>
    </location>
</feature>
<name>GCSH_TROW8</name>
<protein>
    <recommendedName>
        <fullName evidence="1">Glycine cleavage system H protein</fullName>
    </recommendedName>
</protein>
<dbReference type="EMBL" id="BX251412">
    <property type="protein sequence ID" value="CAD67318.1"/>
    <property type="molecule type" value="Genomic_DNA"/>
</dbReference>
<dbReference type="RefSeq" id="WP_011096596.1">
    <property type="nucleotide sequence ID" value="NC_004551.1"/>
</dbReference>
<dbReference type="SMR" id="P64216"/>
<dbReference type="GeneID" id="67388436"/>
<dbReference type="KEGG" id="tws:TW658"/>
<dbReference type="HOGENOM" id="CLU_097408_2_2_11"/>
<dbReference type="GO" id="GO:0005737">
    <property type="term" value="C:cytoplasm"/>
    <property type="evidence" value="ECO:0007669"/>
    <property type="project" value="TreeGrafter"/>
</dbReference>
<dbReference type="GO" id="GO:0005960">
    <property type="term" value="C:glycine cleavage complex"/>
    <property type="evidence" value="ECO:0007669"/>
    <property type="project" value="InterPro"/>
</dbReference>
<dbReference type="GO" id="GO:0019464">
    <property type="term" value="P:glycine decarboxylation via glycine cleavage system"/>
    <property type="evidence" value="ECO:0007669"/>
    <property type="project" value="UniProtKB-UniRule"/>
</dbReference>
<dbReference type="CDD" id="cd06848">
    <property type="entry name" value="GCS_H"/>
    <property type="match status" value="1"/>
</dbReference>
<dbReference type="Gene3D" id="2.40.50.100">
    <property type="match status" value="1"/>
</dbReference>
<dbReference type="HAMAP" id="MF_00272">
    <property type="entry name" value="GcvH"/>
    <property type="match status" value="1"/>
</dbReference>
<dbReference type="InterPro" id="IPR003016">
    <property type="entry name" value="2-oxoA_DH_lipoyl-BS"/>
</dbReference>
<dbReference type="InterPro" id="IPR000089">
    <property type="entry name" value="Biotin_lipoyl"/>
</dbReference>
<dbReference type="InterPro" id="IPR002930">
    <property type="entry name" value="GCV_H"/>
</dbReference>
<dbReference type="InterPro" id="IPR033753">
    <property type="entry name" value="GCV_H/Fam206"/>
</dbReference>
<dbReference type="InterPro" id="IPR011053">
    <property type="entry name" value="Single_hybrid_motif"/>
</dbReference>
<dbReference type="NCBIfam" id="NF002270">
    <property type="entry name" value="PRK01202.1"/>
    <property type="match status" value="1"/>
</dbReference>
<dbReference type="PANTHER" id="PTHR11715">
    <property type="entry name" value="GLYCINE CLEAVAGE SYSTEM H PROTEIN"/>
    <property type="match status" value="1"/>
</dbReference>
<dbReference type="PANTHER" id="PTHR11715:SF3">
    <property type="entry name" value="GLYCINE CLEAVAGE SYSTEM H PROTEIN-RELATED"/>
    <property type="match status" value="1"/>
</dbReference>
<dbReference type="Pfam" id="PF01597">
    <property type="entry name" value="GCV_H"/>
    <property type="match status" value="1"/>
</dbReference>
<dbReference type="SUPFAM" id="SSF51230">
    <property type="entry name" value="Single hybrid motif"/>
    <property type="match status" value="1"/>
</dbReference>
<dbReference type="PROSITE" id="PS50968">
    <property type="entry name" value="BIOTINYL_LIPOYL"/>
    <property type="match status" value="1"/>
</dbReference>
<dbReference type="PROSITE" id="PS00189">
    <property type="entry name" value="LIPOYL"/>
    <property type="match status" value="1"/>
</dbReference>
<keyword id="KW-0450">Lipoyl</keyword>
<sequence>MFDESDLVYSKEHEWVFIDDDIAWVGITKYAVKKLGDIVYIDLPSQDALIVQGECVGEIESTKSVSEIYSPVSGRVIAVNEDVISSPGLLNSDSSVWLFKAECENIPELMDWGQYSEYTKE</sequence>
<comment type="function">
    <text evidence="1">The glycine cleavage system catalyzes the degradation of glycine. The H protein shuttles the methylamine group of glycine from the P protein to the T protein.</text>
</comment>
<comment type="cofactor">
    <cofactor evidence="1">
        <name>(R)-lipoate</name>
        <dbReference type="ChEBI" id="CHEBI:83088"/>
    </cofactor>
    <text evidence="1">Binds 1 lipoyl cofactor covalently.</text>
</comment>
<comment type="subunit">
    <text evidence="1">The glycine cleavage system is composed of four proteins: P, T, L and H.</text>
</comment>
<comment type="similarity">
    <text evidence="1">Belongs to the GcvH family.</text>
</comment>
<gene>
    <name evidence="1" type="primary">gcvH</name>
    <name type="ordered locus">TW658</name>
</gene>
<reference key="1">
    <citation type="journal article" date="2003" name="Lancet">
        <title>Sequencing and analysis of the genome of the Whipple's disease bacterium Tropheryma whipplei.</title>
        <authorList>
            <person name="Bentley S.D."/>
            <person name="Maiwald M."/>
            <person name="Murphy L.D."/>
            <person name="Pallen M.J."/>
            <person name="Yeats C.A."/>
            <person name="Dover L.G."/>
            <person name="Norbertczak H.T."/>
            <person name="Besra G.S."/>
            <person name="Quail M.A."/>
            <person name="Harris D.E."/>
            <person name="von Herbay A."/>
            <person name="Goble A."/>
            <person name="Rutter S."/>
            <person name="Squares R."/>
            <person name="Squares S."/>
            <person name="Barrell B.G."/>
            <person name="Parkhill J."/>
            <person name="Relman D.A."/>
        </authorList>
    </citation>
    <scope>NUCLEOTIDE SEQUENCE [LARGE SCALE GENOMIC DNA]</scope>
    <source>
        <strain>TW08/27</strain>
    </source>
</reference>
<evidence type="ECO:0000255" key="1">
    <source>
        <dbReference type="HAMAP-Rule" id="MF_00272"/>
    </source>
</evidence>
<evidence type="ECO:0000255" key="2">
    <source>
        <dbReference type="PROSITE-ProRule" id="PRU01066"/>
    </source>
</evidence>